<dbReference type="EC" id="2.5.1.61"/>
<dbReference type="EMBL" id="AF233324">
    <property type="protein sequence ID" value="AAF33453.1"/>
    <property type="status" value="ALT_INIT"/>
    <property type="molecule type" value="Genomic_DNA"/>
</dbReference>
<dbReference type="EMBL" id="AE006468">
    <property type="protein sequence ID" value="AAL22783.1"/>
    <property type="status" value="ALT_INIT"/>
    <property type="molecule type" value="Genomic_DNA"/>
</dbReference>
<dbReference type="RefSeq" id="NP_462824.1">
    <property type="nucleotide sequence ID" value="NC_003197.2"/>
</dbReference>
<dbReference type="RefSeq" id="WP_000219148.1">
    <property type="nucleotide sequence ID" value="NC_003197.2"/>
</dbReference>
<dbReference type="SMR" id="P0A1Q8"/>
<dbReference type="STRING" id="99287.STM3938"/>
<dbReference type="PaxDb" id="99287-STM3938"/>
<dbReference type="GeneID" id="1255464"/>
<dbReference type="KEGG" id="stm:STM3938"/>
<dbReference type="PATRIC" id="fig|99287.12.peg.4155"/>
<dbReference type="HOGENOM" id="CLU_019704_0_2_6"/>
<dbReference type="PhylomeDB" id="P0A1Q8"/>
<dbReference type="UniPathway" id="UPA00251">
    <property type="reaction ID" value="UER00319"/>
</dbReference>
<dbReference type="Proteomes" id="UP000001014">
    <property type="component" value="Chromosome"/>
</dbReference>
<dbReference type="GO" id="GO:0005737">
    <property type="term" value="C:cytoplasm"/>
    <property type="evidence" value="ECO:0000318"/>
    <property type="project" value="GO_Central"/>
</dbReference>
<dbReference type="GO" id="GO:0004418">
    <property type="term" value="F:hydroxymethylbilane synthase activity"/>
    <property type="evidence" value="ECO:0000318"/>
    <property type="project" value="GO_Central"/>
</dbReference>
<dbReference type="GO" id="GO:0006783">
    <property type="term" value="P:heme biosynthetic process"/>
    <property type="evidence" value="ECO:0000318"/>
    <property type="project" value="GO_Central"/>
</dbReference>
<dbReference type="GO" id="GO:0006782">
    <property type="term" value="P:protoporphyrinogen IX biosynthetic process"/>
    <property type="evidence" value="ECO:0007669"/>
    <property type="project" value="UniProtKB-UniRule"/>
</dbReference>
<dbReference type="CDD" id="cd13646">
    <property type="entry name" value="PBP2_EcHMBS_like"/>
    <property type="match status" value="1"/>
</dbReference>
<dbReference type="FunFam" id="3.30.160.40:FF:000002">
    <property type="entry name" value="Porphobilinogen deaminase"/>
    <property type="match status" value="1"/>
</dbReference>
<dbReference type="FunFam" id="3.40.190.10:FF:000004">
    <property type="entry name" value="Porphobilinogen deaminase"/>
    <property type="match status" value="1"/>
</dbReference>
<dbReference type="FunFam" id="3.40.190.10:FF:000005">
    <property type="entry name" value="Porphobilinogen deaminase"/>
    <property type="match status" value="1"/>
</dbReference>
<dbReference type="Gene3D" id="3.40.190.10">
    <property type="entry name" value="Periplasmic binding protein-like II"/>
    <property type="match status" value="2"/>
</dbReference>
<dbReference type="Gene3D" id="3.30.160.40">
    <property type="entry name" value="Porphobilinogen deaminase, C-terminal domain"/>
    <property type="match status" value="1"/>
</dbReference>
<dbReference type="HAMAP" id="MF_00260">
    <property type="entry name" value="Porphobil_deam"/>
    <property type="match status" value="1"/>
</dbReference>
<dbReference type="InterPro" id="IPR000860">
    <property type="entry name" value="HemC"/>
</dbReference>
<dbReference type="InterPro" id="IPR022419">
    <property type="entry name" value="Porphobilin_deaminase_cofac_BS"/>
</dbReference>
<dbReference type="InterPro" id="IPR022417">
    <property type="entry name" value="Porphobilin_deaminase_N"/>
</dbReference>
<dbReference type="InterPro" id="IPR022418">
    <property type="entry name" value="Porphobilinogen_deaminase_C"/>
</dbReference>
<dbReference type="InterPro" id="IPR036803">
    <property type="entry name" value="Porphobilinogen_deaminase_C_sf"/>
</dbReference>
<dbReference type="NCBIfam" id="TIGR00212">
    <property type="entry name" value="hemC"/>
    <property type="match status" value="1"/>
</dbReference>
<dbReference type="PANTHER" id="PTHR11557">
    <property type="entry name" value="PORPHOBILINOGEN DEAMINASE"/>
    <property type="match status" value="1"/>
</dbReference>
<dbReference type="PANTHER" id="PTHR11557:SF0">
    <property type="entry name" value="PORPHOBILINOGEN DEAMINASE"/>
    <property type="match status" value="1"/>
</dbReference>
<dbReference type="Pfam" id="PF01379">
    <property type="entry name" value="Porphobil_deam"/>
    <property type="match status" value="1"/>
</dbReference>
<dbReference type="Pfam" id="PF03900">
    <property type="entry name" value="Porphobil_deamC"/>
    <property type="match status" value="1"/>
</dbReference>
<dbReference type="PIRSF" id="PIRSF001438">
    <property type="entry name" value="4pyrrol_synth_OHMeBilane_synth"/>
    <property type="match status" value="1"/>
</dbReference>
<dbReference type="PRINTS" id="PR00151">
    <property type="entry name" value="PORPHBDMNASE"/>
</dbReference>
<dbReference type="SUPFAM" id="SSF53850">
    <property type="entry name" value="Periplasmic binding protein-like II"/>
    <property type="match status" value="1"/>
</dbReference>
<dbReference type="SUPFAM" id="SSF54782">
    <property type="entry name" value="Porphobilinogen deaminase (hydroxymethylbilane synthase), C-terminal domain"/>
    <property type="match status" value="1"/>
</dbReference>
<dbReference type="PROSITE" id="PS00533">
    <property type="entry name" value="PORPHOBILINOGEN_DEAM"/>
    <property type="match status" value="1"/>
</dbReference>
<name>HEM3_SALTY</name>
<protein>
    <recommendedName>
        <fullName>Porphobilinogen deaminase</fullName>
        <shortName>PBG</shortName>
        <ecNumber>2.5.1.61</ecNumber>
    </recommendedName>
    <alternativeName>
        <fullName>Hydroxymethylbilane synthase</fullName>
        <shortName>HMBS</shortName>
    </alternativeName>
    <alternativeName>
        <fullName>Pre-uroporphyrinogen synthase</fullName>
    </alternativeName>
</protein>
<organism>
    <name type="scientific">Salmonella typhimurium (strain LT2 / SGSC1412 / ATCC 700720)</name>
    <dbReference type="NCBI Taxonomy" id="99287"/>
    <lineage>
        <taxon>Bacteria</taxon>
        <taxon>Pseudomonadati</taxon>
        <taxon>Pseudomonadota</taxon>
        <taxon>Gammaproteobacteria</taxon>
        <taxon>Enterobacterales</taxon>
        <taxon>Enterobacteriaceae</taxon>
        <taxon>Salmonella</taxon>
    </lineage>
</organism>
<reference key="1">
    <citation type="journal article" date="2001" name="Nature">
        <title>Complete genome sequence of Salmonella enterica serovar Typhimurium LT2.</title>
        <authorList>
            <person name="McClelland M."/>
            <person name="Sanderson K.E."/>
            <person name="Spieth J."/>
            <person name="Clifton S.W."/>
            <person name="Latreille P."/>
            <person name="Courtney L."/>
            <person name="Porwollik S."/>
            <person name="Ali J."/>
            <person name="Dante M."/>
            <person name="Du F."/>
            <person name="Hou S."/>
            <person name="Layman D."/>
            <person name="Leonard S."/>
            <person name="Nguyen C."/>
            <person name="Scott K."/>
            <person name="Holmes A."/>
            <person name="Grewal N."/>
            <person name="Mulvaney E."/>
            <person name="Ryan E."/>
            <person name="Sun H."/>
            <person name="Florea L."/>
            <person name="Miller W."/>
            <person name="Stoneking T."/>
            <person name="Nhan M."/>
            <person name="Waterston R."/>
            <person name="Wilson R.K."/>
        </authorList>
    </citation>
    <scope>NUCLEOTIDE SEQUENCE [LARGE SCALE GENOMIC DNA]</scope>
    <source>
        <strain>LT2 / SGSC1412 / ATCC 700720</strain>
    </source>
</reference>
<comment type="function">
    <text evidence="1">Tetrapolymerization of the monopyrrole PBG into the hydroxymethylbilane pre-uroporphyrinogen in several discrete steps.</text>
</comment>
<comment type="catalytic activity">
    <reaction>
        <text>4 porphobilinogen + H2O = hydroxymethylbilane + 4 NH4(+)</text>
        <dbReference type="Rhea" id="RHEA:13185"/>
        <dbReference type="ChEBI" id="CHEBI:15377"/>
        <dbReference type="ChEBI" id="CHEBI:28938"/>
        <dbReference type="ChEBI" id="CHEBI:57845"/>
        <dbReference type="ChEBI" id="CHEBI:58126"/>
        <dbReference type="EC" id="2.5.1.61"/>
    </reaction>
</comment>
<comment type="cofactor">
    <cofactor evidence="1">
        <name>dipyrromethane</name>
        <dbReference type="ChEBI" id="CHEBI:60342"/>
    </cofactor>
    <text evidence="1">Binds 1 dipyrromethane group covalently.</text>
</comment>
<comment type="pathway">
    <text>Porphyrin-containing compound metabolism; protoporphyrin-IX biosynthesis; coproporphyrinogen-III from 5-aminolevulinate: step 2/4.</text>
</comment>
<comment type="subunit">
    <text evidence="1">Monomer.</text>
</comment>
<comment type="miscellaneous">
    <text evidence="1">The porphobilinogen subunits are added to the dipyrromethane group.</text>
</comment>
<comment type="similarity">
    <text evidence="2">Belongs to the HMBS family.</text>
</comment>
<comment type="sequence caution" evidence="2">
    <conflict type="erroneous initiation">
        <sequence resource="EMBL-CDS" id="AAF33453"/>
    </conflict>
</comment>
<comment type="sequence caution" evidence="2">
    <conflict type="erroneous initiation">
        <sequence resource="EMBL-CDS" id="AAL22783"/>
    </conflict>
</comment>
<proteinExistence type="inferred from homology"/>
<gene>
    <name type="primary">hemC</name>
    <name type="ordered locus">STM3938</name>
    <name type="ORF">STMD1.53</name>
</gene>
<keyword id="KW-0627">Porphyrin biosynthesis</keyword>
<keyword id="KW-1185">Reference proteome</keyword>
<keyword id="KW-0808">Transferase</keyword>
<accession>P0A1Q8</accession>
<accession>Q9L6Q2</accession>
<sequence length="313" mass="33714">MLDNVLRIATRQSPLALWQAHYVKDALMATHPGLTVELVPMVTRGDVILDTPLAKVGGKGLFVKELEIALLEKRADIAVHSMKDVPVAFPDGLGLVTICEREDPRDAFVSNKYHSLDDLPAGSIVGTSSLRRQCQLAERRPDLIIRSLRGNVGTRLGKLDNGDYDAIILAVAGLKRLGLESRIRTALPPDVSLPAVGQGAVGIECRLDDARTQALLAPLNHSQTALRVTAERAMNTRLEGGCQVPIGSYAEIINGEIWLRALVGAPDGSVMVRGERRGSPEQAEQMGISLAEELLENGARAILTEVYNGETPA</sequence>
<evidence type="ECO:0000250" key="1"/>
<evidence type="ECO:0000305" key="2"/>
<feature type="chain" id="PRO_0000142985" description="Porphobilinogen deaminase">
    <location>
        <begin position="1"/>
        <end position="313"/>
    </location>
</feature>
<feature type="modified residue" description="S-(dipyrrolylmethanemethyl)cysteine" evidence="1">
    <location>
        <position position="242"/>
    </location>
</feature>